<dbReference type="EMBL" id="CP001032">
    <property type="protein sequence ID" value="ACB74755.1"/>
    <property type="molecule type" value="Genomic_DNA"/>
</dbReference>
<dbReference type="RefSeq" id="WP_012374293.1">
    <property type="nucleotide sequence ID" value="NC_010571.1"/>
</dbReference>
<dbReference type="SMR" id="B1ZSR1"/>
<dbReference type="STRING" id="452637.Oter_1471"/>
<dbReference type="KEGG" id="ote:Oter_1471"/>
<dbReference type="eggNOG" id="COG0217">
    <property type="taxonomic scope" value="Bacteria"/>
</dbReference>
<dbReference type="HOGENOM" id="CLU_062974_2_2_0"/>
<dbReference type="OrthoDB" id="9781053at2"/>
<dbReference type="Proteomes" id="UP000007013">
    <property type="component" value="Chromosome"/>
</dbReference>
<dbReference type="GO" id="GO:0005829">
    <property type="term" value="C:cytosol"/>
    <property type="evidence" value="ECO:0007669"/>
    <property type="project" value="TreeGrafter"/>
</dbReference>
<dbReference type="GO" id="GO:0003677">
    <property type="term" value="F:DNA binding"/>
    <property type="evidence" value="ECO:0007669"/>
    <property type="project" value="UniProtKB-UniRule"/>
</dbReference>
<dbReference type="GO" id="GO:0006355">
    <property type="term" value="P:regulation of DNA-templated transcription"/>
    <property type="evidence" value="ECO:0007669"/>
    <property type="project" value="UniProtKB-UniRule"/>
</dbReference>
<dbReference type="FunFam" id="1.10.10.200:FF:000002">
    <property type="entry name" value="Probable transcriptional regulatory protein CLM62_37755"/>
    <property type="match status" value="1"/>
</dbReference>
<dbReference type="Gene3D" id="1.10.10.200">
    <property type="match status" value="1"/>
</dbReference>
<dbReference type="Gene3D" id="3.30.70.980">
    <property type="match status" value="2"/>
</dbReference>
<dbReference type="HAMAP" id="MF_00693">
    <property type="entry name" value="Transcrip_reg_TACO1"/>
    <property type="match status" value="1"/>
</dbReference>
<dbReference type="InterPro" id="IPR017856">
    <property type="entry name" value="Integrase-like_N"/>
</dbReference>
<dbReference type="InterPro" id="IPR048300">
    <property type="entry name" value="TACO1_YebC-like_2nd/3rd_dom"/>
</dbReference>
<dbReference type="InterPro" id="IPR049083">
    <property type="entry name" value="TACO1_YebC_N"/>
</dbReference>
<dbReference type="InterPro" id="IPR002876">
    <property type="entry name" value="Transcrip_reg_TACO1-like"/>
</dbReference>
<dbReference type="InterPro" id="IPR026564">
    <property type="entry name" value="Transcrip_reg_TACO1-like_dom3"/>
</dbReference>
<dbReference type="InterPro" id="IPR029072">
    <property type="entry name" value="YebC-like"/>
</dbReference>
<dbReference type="NCBIfam" id="NF001030">
    <property type="entry name" value="PRK00110.1"/>
    <property type="match status" value="1"/>
</dbReference>
<dbReference type="NCBIfam" id="NF009044">
    <property type="entry name" value="PRK12378.1"/>
    <property type="match status" value="1"/>
</dbReference>
<dbReference type="NCBIfam" id="TIGR01033">
    <property type="entry name" value="YebC/PmpR family DNA-binding transcriptional regulator"/>
    <property type="match status" value="1"/>
</dbReference>
<dbReference type="PANTHER" id="PTHR12532:SF6">
    <property type="entry name" value="TRANSCRIPTIONAL REGULATORY PROTEIN YEBC-RELATED"/>
    <property type="match status" value="1"/>
</dbReference>
<dbReference type="PANTHER" id="PTHR12532">
    <property type="entry name" value="TRANSLATIONAL ACTIVATOR OF CYTOCHROME C OXIDASE 1"/>
    <property type="match status" value="1"/>
</dbReference>
<dbReference type="Pfam" id="PF20772">
    <property type="entry name" value="TACO1_YebC_N"/>
    <property type="match status" value="1"/>
</dbReference>
<dbReference type="Pfam" id="PF01709">
    <property type="entry name" value="Transcrip_reg"/>
    <property type="match status" value="1"/>
</dbReference>
<dbReference type="SUPFAM" id="SSF75625">
    <property type="entry name" value="YebC-like"/>
    <property type="match status" value="1"/>
</dbReference>
<protein>
    <recommendedName>
        <fullName evidence="1">Probable transcriptional regulatory protein Oter_1471</fullName>
    </recommendedName>
</protein>
<accession>B1ZSR1</accession>
<evidence type="ECO:0000255" key="1">
    <source>
        <dbReference type="HAMAP-Rule" id="MF_00693"/>
    </source>
</evidence>
<name>Y1471_OPITP</name>
<comment type="subcellular location">
    <subcellularLocation>
        <location evidence="1">Cytoplasm</location>
    </subcellularLocation>
</comment>
<comment type="similarity">
    <text evidence="1">Belongs to the TACO1 family.</text>
</comment>
<gene>
    <name type="ordered locus">Oter_1471</name>
</gene>
<reference key="1">
    <citation type="journal article" date="2011" name="J. Bacteriol.">
        <title>Genome sequence of the verrucomicrobium Opitutus terrae PB90-1, an abundant inhabitant of rice paddy soil ecosystems.</title>
        <authorList>
            <person name="van Passel M.W."/>
            <person name="Kant R."/>
            <person name="Palva A."/>
            <person name="Copeland A."/>
            <person name="Lucas S."/>
            <person name="Lapidus A."/>
            <person name="Glavina del Rio T."/>
            <person name="Pitluck S."/>
            <person name="Goltsman E."/>
            <person name="Clum A."/>
            <person name="Sun H."/>
            <person name="Schmutz J."/>
            <person name="Larimer F.W."/>
            <person name="Land M.L."/>
            <person name="Hauser L."/>
            <person name="Kyrpides N."/>
            <person name="Mikhailova N."/>
            <person name="Richardson P.P."/>
            <person name="Janssen P.H."/>
            <person name="de Vos W.M."/>
            <person name="Smidt H."/>
        </authorList>
    </citation>
    <scope>NUCLEOTIDE SEQUENCE [LARGE SCALE GENOMIC DNA]</scope>
    <source>
        <strain>DSM 11246 / JCM 15787 / PB90-1</strain>
    </source>
</reference>
<keyword id="KW-0963">Cytoplasm</keyword>
<keyword id="KW-0238">DNA-binding</keyword>
<keyword id="KW-1185">Reference proteome</keyword>
<keyword id="KW-0804">Transcription</keyword>
<keyword id="KW-0805">Transcription regulation</keyword>
<sequence>MAGHNKWSKVKRLKAVTDARKGKVFSRLSRDITLAAKAGGGDPNGNARLRTLLLKARDANMPADNVDRAVKKGTGELPGVVFEEITYEGYGPGGVAFIVKVTTDNKQRAAQEIRSVFLRWGGNLATTGAVSFQFLHAGQFLIPGAQISEDALMEVALDAGADDVITSEQGYEVRCNIHAFDKVAQALDQKGLKPDSAMIAYLPTTTVPVTDPQLAQSITRLHDALDELDDVQDVFSNDEIDESILPAS</sequence>
<feature type="chain" id="PRO_1000132224" description="Probable transcriptional regulatory protein Oter_1471">
    <location>
        <begin position="1"/>
        <end position="248"/>
    </location>
</feature>
<organism>
    <name type="scientific">Opitutus terrae (strain DSM 11246 / JCM 15787 / PB90-1)</name>
    <dbReference type="NCBI Taxonomy" id="452637"/>
    <lineage>
        <taxon>Bacteria</taxon>
        <taxon>Pseudomonadati</taxon>
        <taxon>Verrucomicrobiota</taxon>
        <taxon>Opitutia</taxon>
        <taxon>Opitutales</taxon>
        <taxon>Opitutaceae</taxon>
        <taxon>Opitutus</taxon>
    </lineage>
</organism>
<proteinExistence type="inferred from homology"/>